<proteinExistence type="inferred from homology"/>
<sequence>MFIALGIQLFVAVTYAAGKDDEHFSVDYCGMNCTQQEDGSWTACSGRNEECRCYHESGKKNGLCLSTTYIDFSQYGNPSDSDIAAASPRP</sequence>
<dbReference type="EMBL" id="GADI01007390">
    <property type="protein sequence ID" value="JAA66418.1"/>
    <property type="molecule type" value="mRNA"/>
</dbReference>
<dbReference type="GO" id="GO:0005576">
    <property type="term" value="C:extracellular region"/>
    <property type="evidence" value="ECO:0007669"/>
    <property type="project" value="UniProtKB-SubCell"/>
</dbReference>
<dbReference type="GO" id="GO:0019958">
    <property type="term" value="F:C-X-C chemokine binding"/>
    <property type="evidence" value="ECO:0000314"/>
    <property type="project" value="UniProtKB"/>
</dbReference>
<accession>A0A0K8R6B3</accession>
<keyword id="KW-1015">Disulfide bond</keyword>
<keyword id="KW-0325">Glycoprotein</keyword>
<keyword id="KW-0964">Secreted</keyword>
<keyword id="KW-0732">Signal</keyword>
<reference evidence="7" key="1">
    <citation type="journal article" date="2013" name="FASEB J.">
        <title>De novo Ixodes ricinus salivary gland transcriptome analysis using two next-generation sequencing methodologies.</title>
        <authorList>
            <person name="Schwarz A."/>
            <person name="von Reumont B.M."/>
            <person name="Erhart J."/>
            <person name="Chagas A.C."/>
            <person name="Ribeiro J.M."/>
            <person name="Kotsyfakis M."/>
        </authorList>
    </citation>
    <scope>NUCLEOTIDE SEQUENCE [LARGE SCALE MRNA]</scope>
    <source>
        <tissue evidence="7">Salivary gland</tissue>
    </source>
</reference>
<reference evidence="6" key="2">
    <citation type="journal article" date="2019" name="J. Biol. Chem.">
        <title>A knottin scaffold directs the CXC-chemokine-binding specificity of tick evasins.</title>
        <authorList>
            <person name="Lee A.W."/>
            <person name="Deruaz M."/>
            <person name="Lynch C."/>
            <person name="Davies G."/>
            <person name="Singh K."/>
            <person name="Alenazi Y."/>
            <person name="Eaton J.R.O."/>
            <person name="Kawamura A."/>
            <person name="Shaw J."/>
            <person name="Proudfoot A.E.I."/>
            <person name="Dias J.M."/>
            <person name="Bhattacharya S."/>
        </authorList>
    </citation>
    <scope>FUNCTION</scope>
</reference>
<protein>
    <recommendedName>
        <fullName evidence="5">Evasin P1128</fullName>
    </recommendedName>
</protein>
<organism evidence="7">
    <name type="scientific">Ixodes ricinus</name>
    <name type="common">Common tick</name>
    <name type="synonym">Acarus ricinus</name>
    <dbReference type="NCBI Taxonomy" id="34613"/>
    <lineage>
        <taxon>Eukaryota</taxon>
        <taxon>Metazoa</taxon>
        <taxon>Ecdysozoa</taxon>
        <taxon>Arthropoda</taxon>
        <taxon>Chelicerata</taxon>
        <taxon>Arachnida</taxon>
        <taxon>Acari</taxon>
        <taxon>Parasitiformes</taxon>
        <taxon>Ixodida</taxon>
        <taxon>Ixodoidea</taxon>
        <taxon>Ixodidae</taxon>
        <taxon>Ixodinae</taxon>
        <taxon>Ixodes</taxon>
    </lineage>
</organism>
<name>E1128_IXORI</name>
<evidence type="ECO:0000250" key="1">
    <source>
        <dbReference type="UniProtKB" id="P0C8E8"/>
    </source>
</evidence>
<evidence type="ECO:0000255" key="2"/>
<evidence type="ECO:0000255" key="3">
    <source>
        <dbReference type="PROSITE-ProRule" id="PRU00498"/>
    </source>
</evidence>
<evidence type="ECO:0000269" key="4">
    <source>
    </source>
</evidence>
<evidence type="ECO:0000303" key="5">
    <source>
    </source>
</evidence>
<evidence type="ECO:0000305" key="6"/>
<evidence type="ECO:0000312" key="7">
    <source>
        <dbReference type="EMBL" id="JAA66418.1"/>
    </source>
</evidence>
<feature type="signal peptide" evidence="2">
    <location>
        <begin position="1"/>
        <end position="18"/>
    </location>
</feature>
<feature type="chain" id="PRO_5005516199" description="Evasin P1128" evidence="2">
    <location>
        <begin position="19"/>
        <end position="90"/>
    </location>
</feature>
<feature type="glycosylation site" description="N-linked (GlcNAc...) asparagine" evidence="3">
    <location>
        <position position="32"/>
    </location>
</feature>
<feature type="disulfide bond" evidence="1">
    <location>
        <begin position="29"/>
        <end position="51"/>
    </location>
</feature>
<feature type="disulfide bond" evidence="1">
    <location>
        <begin position="33"/>
        <end position="53"/>
    </location>
</feature>
<feature type="disulfide bond" evidence="1">
    <location>
        <begin position="44"/>
        <end position="64"/>
    </location>
</feature>
<comment type="function">
    <text evidence="4">Salivary chemokine-binding protein which binds to host chemokines CXCL1, CXCL2, CXCL3, CXCL5 and CXCL8.</text>
</comment>
<comment type="subcellular location">
    <subcellularLocation>
        <location evidence="6">Secreted</location>
    </subcellularLocation>
</comment>